<comment type="catalytic activity">
    <reaction>
        <text>tRNA(Arg) + L-arginine + ATP = L-arginyl-tRNA(Arg) + AMP + diphosphate</text>
        <dbReference type="Rhea" id="RHEA:20301"/>
        <dbReference type="Rhea" id="RHEA-COMP:9658"/>
        <dbReference type="Rhea" id="RHEA-COMP:9673"/>
        <dbReference type="ChEBI" id="CHEBI:30616"/>
        <dbReference type="ChEBI" id="CHEBI:32682"/>
        <dbReference type="ChEBI" id="CHEBI:33019"/>
        <dbReference type="ChEBI" id="CHEBI:78442"/>
        <dbReference type="ChEBI" id="CHEBI:78513"/>
        <dbReference type="ChEBI" id="CHEBI:456215"/>
        <dbReference type="EC" id="6.1.1.19"/>
    </reaction>
</comment>
<comment type="subunit">
    <text evidence="1">Monomer.</text>
</comment>
<comment type="subcellular location">
    <subcellularLocation>
        <location evidence="1">Cytoplasm</location>
    </subcellularLocation>
</comment>
<comment type="similarity">
    <text evidence="2">Belongs to the class-I aminoacyl-tRNA synthetase family.</text>
</comment>
<name>SYR_PASMU</name>
<accession>P57851</accession>
<proteinExistence type="inferred from homology"/>
<sequence length="563" mass="63332">MIASGADTQSDALVRQSAKVQFGDYQANGIMAAAKKLGRNPREFAQQVIEQLDLSEIAEKIEIAGPGFINLFLDKNWLAEQISLAVNDDKLGIQATETQTVVADYSSPNVAKEMHVGHLRSTIIGDAVVRTLEFLGNKVIRANHVGDWGTQFGMLIAYLEKVENESASEMELSDLEAFYRAAKEHYDSDPVFAEKARNYVVKLQSGDEYCRTMWKKLVDITMQQNQHNYDRLNVTLTEKDVMGESLYNPMLSDIVADLKQQGLAVEDEGAFVVYLDEFKNKEGEPMGVIVQKKDGGFLYTTTDIAAAKYRYETLKADRALVFSDTRQSQHMQQAWLITRKAGYVPDSFQLEHKNFGMMLGKDGKPFKTRTGGTVKLADLLDEAVERATQLIQEKSTALSAQEKAAVIEAVAIGSVKYADLSKNRTTDYVFDWDNMLSFEGNTAPYMQYAYTRIRSIFNRSELNEQDLSESPVVLSNEKERLLAIKLLQFEEAIQIVAKEGTPHVLCTYLYELAGVFSSFYEHCPILNNEDEQIKRSRLKLALLTEKTLKQGLDLLGIKTVDKM</sequence>
<protein>
    <recommendedName>
        <fullName>Arginine--tRNA ligase</fullName>
        <ecNumber>6.1.1.19</ecNumber>
    </recommendedName>
    <alternativeName>
        <fullName>Arginyl-tRNA synthetase</fullName>
        <shortName>ArgRS</shortName>
    </alternativeName>
</protein>
<organism>
    <name type="scientific">Pasteurella multocida (strain Pm70)</name>
    <dbReference type="NCBI Taxonomy" id="272843"/>
    <lineage>
        <taxon>Bacteria</taxon>
        <taxon>Pseudomonadati</taxon>
        <taxon>Pseudomonadota</taxon>
        <taxon>Gammaproteobacteria</taxon>
        <taxon>Pasteurellales</taxon>
        <taxon>Pasteurellaceae</taxon>
        <taxon>Pasteurella</taxon>
    </lineage>
</organism>
<gene>
    <name type="primary">argS</name>
    <name type="ordered locus">PM0551</name>
</gene>
<feature type="chain" id="PRO_0000151586" description="Arginine--tRNA ligase">
    <location>
        <begin position="1"/>
        <end position="563"/>
    </location>
</feature>
<feature type="short sequence motif" description="'HIGH' region">
    <location>
        <begin position="108"/>
        <end position="118"/>
    </location>
</feature>
<keyword id="KW-0030">Aminoacyl-tRNA synthetase</keyword>
<keyword id="KW-0067">ATP-binding</keyword>
<keyword id="KW-0963">Cytoplasm</keyword>
<keyword id="KW-0436">Ligase</keyword>
<keyword id="KW-0547">Nucleotide-binding</keyword>
<keyword id="KW-0648">Protein biosynthesis</keyword>
<keyword id="KW-1185">Reference proteome</keyword>
<dbReference type="EC" id="6.1.1.19"/>
<dbReference type="EMBL" id="AE004439">
    <property type="protein sequence ID" value="AAK02635.1"/>
    <property type="molecule type" value="Genomic_DNA"/>
</dbReference>
<dbReference type="SMR" id="P57851"/>
<dbReference type="STRING" id="272843.PM0551"/>
<dbReference type="EnsemblBacteria" id="AAK02635">
    <property type="protein sequence ID" value="AAK02635"/>
    <property type="gene ID" value="PM0551"/>
</dbReference>
<dbReference type="KEGG" id="pmu:PM0551"/>
<dbReference type="HOGENOM" id="CLU_006406_5_1_6"/>
<dbReference type="Proteomes" id="UP000000809">
    <property type="component" value="Chromosome"/>
</dbReference>
<dbReference type="GO" id="GO:0005737">
    <property type="term" value="C:cytoplasm"/>
    <property type="evidence" value="ECO:0007669"/>
    <property type="project" value="UniProtKB-SubCell"/>
</dbReference>
<dbReference type="GO" id="GO:0004814">
    <property type="term" value="F:arginine-tRNA ligase activity"/>
    <property type="evidence" value="ECO:0007669"/>
    <property type="project" value="UniProtKB-UniRule"/>
</dbReference>
<dbReference type="GO" id="GO:0005524">
    <property type="term" value="F:ATP binding"/>
    <property type="evidence" value="ECO:0007669"/>
    <property type="project" value="UniProtKB-UniRule"/>
</dbReference>
<dbReference type="GO" id="GO:0006420">
    <property type="term" value="P:arginyl-tRNA aminoacylation"/>
    <property type="evidence" value="ECO:0007669"/>
    <property type="project" value="UniProtKB-UniRule"/>
</dbReference>
<dbReference type="CDD" id="cd07956">
    <property type="entry name" value="Anticodon_Ia_Arg"/>
    <property type="match status" value="1"/>
</dbReference>
<dbReference type="CDD" id="cd00671">
    <property type="entry name" value="ArgRS_core"/>
    <property type="match status" value="1"/>
</dbReference>
<dbReference type="FunFam" id="1.10.730.10:FF:000001">
    <property type="entry name" value="Arginine--tRNA ligase"/>
    <property type="match status" value="1"/>
</dbReference>
<dbReference type="FunFam" id="3.40.50.620:FF:000030">
    <property type="entry name" value="Arginine--tRNA ligase"/>
    <property type="match status" value="1"/>
</dbReference>
<dbReference type="Gene3D" id="3.30.1360.70">
    <property type="entry name" value="Arginyl tRNA synthetase N-terminal domain"/>
    <property type="match status" value="1"/>
</dbReference>
<dbReference type="Gene3D" id="3.40.50.620">
    <property type="entry name" value="HUPs"/>
    <property type="match status" value="1"/>
</dbReference>
<dbReference type="Gene3D" id="1.10.730.10">
    <property type="entry name" value="Isoleucyl-tRNA Synthetase, Domain 1"/>
    <property type="match status" value="1"/>
</dbReference>
<dbReference type="HAMAP" id="MF_00123">
    <property type="entry name" value="Arg_tRNA_synth"/>
    <property type="match status" value="1"/>
</dbReference>
<dbReference type="InterPro" id="IPR001412">
    <property type="entry name" value="aa-tRNA-synth_I_CS"/>
</dbReference>
<dbReference type="InterPro" id="IPR001278">
    <property type="entry name" value="Arg-tRNA-ligase"/>
</dbReference>
<dbReference type="InterPro" id="IPR005148">
    <property type="entry name" value="Arg-tRNA-synth_N"/>
</dbReference>
<dbReference type="InterPro" id="IPR036695">
    <property type="entry name" value="Arg-tRNA-synth_N_sf"/>
</dbReference>
<dbReference type="InterPro" id="IPR035684">
    <property type="entry name" value="ArgRS_core"/>
</dbReference>
<dbReference type="InterPro" id="IPR008909">
    <property type="entry name" value="DALR_anticod-bd"/>
</dbReference>
<dbReference type="InterPro" id="IPR014729">
    <property type="entry name" value="Rossmann-like_a/b/a_fold"/>
</dbReference>
<dbReference type="InterPro" id="IPR009080">
    <property type="entry name" value="tRNAsynth_Ia_anticodon-bd"/>
</dbReference>
<dbReference type="NCBIfam" id="TIGR00456">
    <property type="entry name" value="argS"/>
    <property type="match status" value="1"/>
</dbReference>
<dbReference type="PANTHER" id="PTHR11956:SF5">
    <property type="entry name" value="ARGININE--TRNA LIGASE, CYTOPLASMIC"/>
    <property type="match status" value="1"/>
</dbReference>
<dbReference type="PANTHER" id="PTHR11956">
    <property type="entry name" value="ARGINYL-TRNA SYNTHETASE"/>
    <property type="match status" value="1"/>
</dbReference>
<dbReference type="Pfam" id="PF03485">
    <property type="entry name" value="Arg_tRNA_synt_N"/>
    <property type="match status" value="1"/>
</dbReference>
<dbReference type="Pfam" id="PF05746">
    <property type="entry name" value="DALR_1"/>
    <property type="match status" value="1"/>
</dbReference>
<dbReference type="Pfam" id="PF00750">
    <property type="entry name" value="tRNA-synt_1d"/>
    <property type="match status" value="1"/>
</dbReference>
<dbReference type="PRINTS" id="PR01038">
    <property type="entry name" value="TRNASYNTHARG"/>
</dbReference>
<dbReference type="SMART" id="SM01016">
    <property type="entry name" value="Arg_tRNA_synt_N"/>
    <property type="match status" value="1"/>
</dbReference>
<dbReference type="SMART" id="SM00836">
    <property type="entry name" value="DALR_1"/>
    <property type="match status" value="1"/>
</dbReference>
<dbReference type="SUPFAM" id="SSF47323">
    <property type="entry name" value="Anticodon-binding domain of a subclass of class I aminoacyl-tRNA synthetases"/>
    <property type="match status" value="1"/>
</dbReference>
<dbReference type="SUPFAM" id="SSF55190">
    <property type="entry name" value="Arginyl-tRNA synthetase (ArgRS), N-terminal 'additional' domain"/>
    <property type="match status" value="1"/>
</dbReference>
<dbReference type="SUPFAM" id="SSF52374">
    <property type="entry name" value="Nucleotidylyl transferase"/>
    <property type="match status" value="1"/>
</dbReference>
<dbReference type="PROSITE" id="PS00178">
    <property type="entry name" value="AA_TRNA_LIGASE_I"/>
    <property type="match status" value="1"/>
</dbReference>
<reference key="1">
    <citation type="journal article" date="2001" name="Proc. Natl. Acad. Sci. U.S.A.">
        <title>Complete genomic sequence of Pasteurella multocida Pm70.</title>
        <authorList>
            <person name="May B.J."/>
            <person name="Zhang Q."/>
            <person name="Li L.L."/>
            <person name="Paustian M.L."/>
            <person name="Whittam T.S."/>
            <person name="Kapur V."/>
        </authorList>
    </citation>
    <scope>NUCLEOTIDE SEQUENCE [LARGE SCALE GENOMIC DNA]</scope>
    <source>
        <strain>Pm70</strain>
    </source>
</reference>
<evidence type="ECO:0000250" key="1"/>
<evidence type="ECO:0000305" key="2"/>